<organism>
    <name type="scientific">Lodderomyces elongisporus (strain ATCC 11503 / CBS 2605 / JCM 1781 / NBRC 1676 / NRRL YB-4239)</name>
    <name type="common">Yeast</name>
    <name type="synonym">Saccharomyces elongisporus</name>
    <dbReference type="NCBI Taxonomy" id="379508"/>
    <lineage>
        <taxon>Eukaryota</taxon>
        <taxon>Fungi</taxon>
        <taxon>Dikarya</taxon>
        <taxon>Ascomycota</taxon>
        <taxon>Saccharomycotina</taxon>
        <taxon>Pichiomycetes</taxon>
        <taxon>Debaryomycetaceae</taxon>
        <taxon>Candida/Lodderomyces clade</taxon>
        <taxon>Lodderomyces</taxon>
    </lineage>
</organism>
<evidence type="ECO:0000250" key="1"/>
<evidence type="ECO:0000255" key="2">
    <source>
        <dbReference type="PROSITE-ProRule" id="PRU00176"/>
    </source>
</evidence>
<evidence type="ECO:0000255" key="3">
    <source>
        <dbReference type="PROSITE-ProRule" id="PRU00641"/>
    </source>
</evidence>
<evidence type="ECO:0000256" key="4">
    <source>
        <dbReference type="SAM" id="MobiDB-lite"/>
    </source>
</evidence>
<evidence type="ECO:0000305" key="5"/>
<dbReference type="EMBL" id="CH981525">
    <property type="protein sequence ID" value="EDK43372.1"/>
    <property type="molecule type" value="Genomic_DNA"/>
</dbReference>
<dbReference type="RefSeq" id="XP_001526722.1">
    <property type="nucleotide sequence ID" value="XM_001526672.1"/>
</dbReference>
<dbReference type="SMR" id="A5DW14"/>
<dbReference type="FunCoup" id="A5DW14">
    <property type="interactions" value="1314"/>
</dbReference>
<dbReference type="STRING" id="379508.A5DW14"/>
<dbReference type="GeneID" id="5234096"/>
<dbReference type="KEGG" id="lel:PVL30_001520"/>
<dbReference type="VEuPathDB" id="FungiDB:LELG_01550"/>
<dbReference type="eggNOG" id="KOG0123">
    <property type="taxonomic scope" value="Eukaryota"/>
</dbReference>
<dbReference type="HOGENOM" id="CLU_012062_22_4_1"/>
<dbReference type="InParanoid" id="A5DW14"/>
<dbReference type="OMA" id="MNGRMLN"/>
<dbReference type="OrthoDB" id="19742at2759"/>
<dbReference type="Proteomes" id="UP000001996">
    <property type="component" value="Unassembled WGS sequence"/>
</dbReference>
<dbReference type="GO" id="GO:0010494">
    <property type="term" value="C:cytoplasmic stress granule"/>
    <property type="evidence" value="ECO:0007669"/>
    <property type="project" value="EnsemblFungi"/>
</dbReference>
<dbReference type="GO" id="GO:0071014">
    <property type="term" value="C:post-mRNA release spliceosomal complex"/>
    <property type="evidence" value="ECO:0007669"/>
    <property type="project" value="EnsemblFungi"/>
</dbReference>
<dbReference type="GO" id="GO:0005840">
    <property type="term" value="C:ribosome"/>
    <property type="evidence" value="ECO:0007669"/>
    <property type="project" value="EnsemblFungi"/>
</dbReference>
<dbReference type="GO" id="GO:0140693">
    <property type="term" value="F:molecular condensate scaffold activity"/>
    <property type="evidence" value="ECO:0007669"/>
    <property type="project" value="EnsemblFungi"/>
</dbReference>
<dbReference type="GO" id="GO:0008143">
    <property type="term" value="F:poly(A) binding"/>
    <property type="evidence" value="ECO:0007669"/>
    <property type="project" value="EnsemblFungi"/>
</dbReference>
<dbReference type="GO" id="GO:1990841">
    <property type="term" value="F:promoter-specific chromatin binding"/>
    <property type="evidence" value="ECO:0007669"/>
    <property type="project" value="EnsemblFungi"/>
</dbReference>
<dbReference type="GO" id="GO:0008428">
    <property type="term" value="F:ribonuclease inhibitor activity"/>
    <property type="evidence" value="ECO:0007669"/>
    <property type="project" value="EnsemblFungi"/>
</dbReference>
<dbReference type="GO" id="GO:0031124">
    <property type="term" value="P:mRNA 3'-end processing"/>
    <property type="evidence" value="ECO:0007669"/>
    <property type="project" value="EnsemblFungi"/>
</dbReference>
<dbReference type="GO" id="GO:0051028">
    <property type="term" value="P:mRNA transport"/>
    <property type="evidence" value="ECO:0007669"/>
    <property type="project" value="UniProtKB-KW"/>
</dbReference>
<dbReference type="GO" id="GO:0000289">
    <property type="term" value="P:nuclear-transcribed mRNA poly(A) tail shortening"/>
    <property type="evidence" value="ECO:0007669"/>
    <property type="project" value="EnsemblFungi"/>
</dbReference>
<dbReference type="GO" id="GO:0060211">
    <property type="term" value="P:regulation of nuclear-transcribed mRNA poly(A) tail shortening"/>
    <property type="evidence" value="ECO:0007669"/>
    <property type="project" value="EnsemblFungi"/>
</dbReference>
<dbReference type="GO" id="GO:0006446">
    <property type="term" value="P:regulation of translational initiation"/>
    <property type="evidence" value="ECO:0007669"/>
    <property type="project" value="EnsemblFungi"/>
</dbReference>
<dbReference type="CDD" id="cd12378">
    <property type="entry name" value="RRM1_I_PABPs"/>
    <property type="match status" value="1"/>
</dbReference>
<dbReference type="CDD" id="cd12379">
    <property type="entry name" value="RRM2_I_PABPs"/>
    <property type="match status" value="1"/>
</dbReference>
<dbReference type="CDD" id="cd12380">
    <property type="entry name" value="RRM3_I_PABPs"/>
    <property type="match status" value="1"/>
</dbReference>
<dbReference type="CDD" id="cd12381">
    <property type="entry name" value="RRM4_I_PABPs"/>
    <property type="match status" value="1"/>
</dbReference>
<dbReference type="FunFam" id="3.30.70.330:FF:000003">
    <property type="entry name" value="Polyadenylate-binding protein"/>
    <property type="match status" value="1"/>
</dbReference>
<dbReference type="FunFam" id="3.30.70.330:FF:000211">
    <property type="entry name" value="Polyadenylate-binding protein"/>
    <property type="match status" value="1"/>
</dbReference>
<dbReference type="FunFam" id="3.30.70.330:FF:000384">
    <property type="entry name" value="Polyadenylate-binding protein"/>
    <property type="match status" value="1"/>
</dbReference>
<dbReference type="FunFam" id="3.30.70.330:FF:000385">
    <property type="entry name" value="Polyadenylate-binding protein"/>
    <property type="match status" value="1"/>
</dbReference>
<dbReference type="Gene3D" id="3.30.70.330">
    <property type="match status" value="4"/>
</dbReference>
<dbReference type="Gene3D" id="1.10.1900.10">
    <property type="entry name" value="c-terminal domain of poly(a) binding protein"/>
    <property type="match status" value="1"/>
</dbReference>
<dbReference type="InterPro" id="IPR012677">
    <property type="entry name" value="Nucleotide-bd_a/b_plait_sf"/>
</dbReference>
<dbReference type="InterPro" id="IPR036053">
    <property type="entry name" value="PABP-dom"/>
</dbReference>
<dbReference type="InterPro" id="IPR006515">
    <property type="entry name" value="PABP_1234"/>
</dbReference>
<dbReference type="InterPro" id="IPR002004">
    <property type="entry name" value="PABP_HYD_C"/>
</dbReference>
<dbReference type="InterPro" id="IPR034364">
    <property type="entry name" value="PABP_RRM1"/>
</dbReference>
<dbReference type="InterPro" id="IPR035979">
    <property type="entry name" value="RBD_domain_sf"/>
</dbReference>
<dbReference type="InterPro" id="IPR045305">
    <property type="entry name" value="RRM2_I_PABPs"/>
</dbReference>
<dbReference type="InterPro" id="IPR000504">
    <property type="entry name" value="RRM_dom"/>
</dbReference>
<dbReference type="InterPro" id="IPR003954">
    <property type="entry name" value="RRM_dom_euk"/>
</dbReference>
<dbReference type="NCBIfam" id="TIGR01628">
    <property type="entry name" value="PABP-1234"/>
    <property type="match status" value="1"/>
</dbReference>
<dbReference type="PANTHER" id="PTHR24012">
    <property type="entry name" value="RNA BINDING PROTEIN"/>
    <property type="match status" value="1"/>
</dbReference>
<dbReference type="Pfam" id="PF00658">
    <property type="entry name" value="MLLE"/>
    <property type="match status" value="1"/>
</dbReference>
<dbReference type="Pfam" id="PF00076">
    <property type="entry name" value="RRM_1"/>
    <property type="match status" value="4"/>
</dbReference>
<dbReference type="SMART" id="SM00517">
    <property type="entry name" value="PolyA"/>
    <property type="match status" value="1"/>
</dbReference>
<dbReference type="SMART" id="SM00360">
    <property type="entry name" value="RRM"/>
    <property type="match status" value="4"/>
</dbReference>
<dbReference type="SMART" id="SM00361">
    <property type="entry name" value="RRM_1"/>
    <property type="match status" value="4"/>
</dbReference>
<dbReference type="SUPFAM" id="SSF63570">
    <property type="entry name" value="PABC (PABP) domain"/>
    <property type="match status" value="1"/>
</dbReference>
<dbReference type="SUPFAM" id="SSF54928">
    <property type="entry name" value="RNA-binding domain, RBD"/>
    <property type="match status" value="2"/>
</dbReference>
<dbReference type="PROSITE" id="PS51309">
    <property type="entry name" value="PABC"/>
    <property type="match status" value="1"/>
</dbReference>
<dbReference type="PROSITE" id="PS50102">
    <property type="entry name" value="RRM"/>
    <property type="match status" value="4"/>
</dbReference>
<accession>A5DW14</accession>
<proteinExistence type="inferred from homology"/>
<feature type="chain" id="PRO_0000295393" description="Polyadenylate-binding protein, cytoplasmic and nuclear">
    <location>
        <begin position="1"/>
        <end position="661"/>
    </location>
</feature>
<feature type="domain" description="RRM 1" evidence="2">
    <location>
        <begin position="67"/>
        <end position="145"/>
    </location>
</feature>
<feature type="domain" description="RRM 2" evidence="2">
    <location>
        <begin position="155"/>
        <end position="232"/>
    </location>
</feature>
<feature type="domain" description="RRM 3" evidence="2">
    <location>
        <begin position="248"/>
        <end position="325"/>
    </location>
</feature>
<feature type="domain" description="RRM 4" evidence="2">
    <location>
        <begin position="351"/>
        <end position="428"/>
    </location>
</feature>
<feature type="domain" description="PABC" evidence="3">
    <location>
        <begin position="563"/>
        <end position="644"/>
    </location>
</feature>
<feature type="region of interest" description="Disordered" evidence="4">
    <location>
        <begin position="1"/>
        <end position="61"/>
    </location>
</feature>
<feature type="region of interest" description="Disordered" evidence="4">
    <location>
        <begin position="473"/>
        <end position="563"/>
    </location>
</feature>
<feature type="compositionally biased region" description="Polar residues" evidence="4">
    <location>
        <begin position="1"/>
        <end position="11"/>
    </location>
</feature>
<feature type="compositionally biased region" description="Low complexity" evidence="4">
    <location>
        <begin position="20"/>
        <end position="51"/>
    </location>
</feature>
<feature type="compositionally biased region" description="Pro residues" evidence="4">
    <location>
        <begin position="501"/>
        <end position="511"/>
    </location>
</feature>
<feature type="compositionally biased region" description="Polar residues" evidence="4">
    <location>
        <begin position="523"/>
        <end position="532"/>
    </location>
</feature>
<feature type="compositionally biased region" description="Low complexity" evidence="4">
    <location>
        <begin position="533"/>
        <end position="549"/>
    </location>
</feature>
<keyword id="KW-0963">Cytoplasm</keyword>
<keyword id="KW-0507">mRNA processing</keyword>
<keyword id="KW-0509">mRNA transport</keyword>
<keyword id="KW-0539">Nucleus</keyword>
<keyword id="KW-1185">Reference proteome</keyword>
<keyword id="KW-0677">Repeat</keyword>
<keyword id="KW-0694">RNA-binding</keyword>
<keyword id="KW-0810">Translation regulation</keyword>
<keyword id="KW-0813">Transport</keyword>
<protein>
    <recommendedName>
        <fullName>Polyadenylate-binding protein, cytoplasmic and nuclear</fullName>
        <shortName>PABP</shortName>
        <shortName>Poly(A)-binding protein</shortName>
    </recommendedName>
    <alternativeName>
        <fullName>Polyadenylate tail-binding protein</fullName>
    </alternativeName>
</protein>
<gene>
    <name type="primary">PAB1</name>
    <name type="ORF">LELG_01550</name>
</gene>
<sequence>MSAAETNQVQESLEKLNLDSSSSPAAGGATTATTTNNAESSDATSSSVPADSAEEQGESSGIAENSASLYVGELNPSVNEATLFEIFSPIGQVASIRVCRDAVSKKSLGYAYVNYHKLEDGEKAIEELNYTPVEGRPCRIMWSQRDPSARRSGDGNIFIKNLHPAIDNKALHDTFSAFGKILSVKVATDDLGQSKCFGFVHYETEEAAQAAIESVNGMLLNDREVYVGKHVSKKDRESKLEEMKANYTNIYVKNIDLAYTEKEFEELFAPFGKITSIYLEKDAEGKSKGFGFVNFEEHEAAAKAVEELNDKEINGQKIYVGRAQKKRERTEELKKQYEAVRLEKLSKYQGVNLFVKNLDEQIDSEKLEEEFKPFGTITSSKVMVDDAGKSKGFGFVCFSTPEEATKAITEMNQRMVNGKPLYVALAQRKDVRRSQLEQQIQARNQMRMQNAAAAGGLPGQFMPPMFYGQQGFFPPNGRGNAPFPGPNPQMMMRGRGQPFPEQWPRPGPNGQPVPVYGMPPQFQDFNGQNMRPQQQQQQQQQQQQQQQQQRGYYPNRPAGGNVPAKDLAALIANAPLEAQKRILGEELYQRIVATGKAQEPEAAGKITGMMLGLENQEILDLLDDEELFNNHFEEALNAFEEYKNSEGANAATGAPAPSEEA</sequence>
<name>PABP_LODEL</name>
<comment type="function">
    <text evidence="1">Binds the poly(A) tail of mRNA. Appears to be an important mediator of the multiple roles of the poly(A) tail in mRNA biogenesis, stability and translation. In the nucleus, involved in both mRNA cleavage and polyadenylation. Is also required for efficient mRNA export to the cytoplasm. Acts in concert with a poly(A)-specific nuclease (PAN) to affect poly(A) tail shortening, which may occur concomitantly with either nucleocytoplasmic mRNA transport or translational initiation. In the cytoplasm, stimulates translation initiation and regulates mRNA decay through translation termination-coupled poly(A) shortening, probably mediated by PAN (By similarity).</text>
</comment>
<comment type="subcellular location">
    <subcellularLocation>
        <location evidence="1">Cytoplasm</location>
    </subcellularLocation>
    <subcellularLocation>
        <location evidence="1">Nucleus</location>
    </subcellularLocation>
</comment>
<comment type="similarity">
    <text evidence="5">Belongs to the polyadenylate-binding protein type-1 family.</text>
</comment>
<reference key="1">
    <citation type="journal article" date="2009" name="Nature">
        <title>Evolution of pathogenicity and sexual reproduction in eight Candida genomes.</title>
        <authorList>
            <person name="Butler G."/>
            <person name="Rasmussen M.D."/>
            <person name="Lin M.F."/>
            <person name="Santos M.A.S."/>
            <person name="Sakthikumar S."/>
            <person name="Munro C.A."/>
            <person name="Rheinbay E."/>
            <person name="Grabherr M."/>
            <person name="Forche A."/>
            <person name="Reedy J.L."/>
            <person name="Agrafioti I."/>
            <person name="Arnaud M.B."/>
            <person name="Bates S."/>
            <person name="Brown A.J.P."/>
            <person name="Brunke S."/>
            <person name="Costanzo M.C."/>
            <person name="Fitzpatrick D.A."/>
            <person name="de Groot P.W.J."/>
            <person name="Harris D."/>
            <person name="Hoyer L.L."/>
            <person name="Hube B."/>
            <person name="Klis F.M."/>
            <person name="Kodira C."/>
            <person name="Lennard N."/>
            <person name="Logue M.E."/>
            <person name="Martin R."/>
            <person name="Neiman A.M."/>
            <person name="Nikolaou E."/>
            <person name="Quail M.A."/>
            <person name="Quinn J."/>
            <person name="Santos M.C."/>
            <person name="Schmitzberger F.F."/>
            <person name="Sherlock G."/>
            <person name="Shah P."/>
            <person name="Silverstein K.A.T."/>
            <person name="Skrzypek M.S."/>
            <person name="Soll D."/>
            <person name="Staggs R."/>
            <person name="Stansfield I."/>
            <person name="Stumpf M.P.H."/>
            <person name="Sudbery P.E."/>
            <person name="Srikantha T."/>
            <person name="Zeng Q."/>
            <person name="Berman J."/>
            <person name="Berriman M."/>
            <person name="Heitman J."/>
            <person name="Gow N.A.R."/>
            <person name="Lorenz M.C."/>
            <person name="Birren B.W."/>
            <person name="Kellis M."/>
            <person name="Cuomo C.A."/>
        </authorList>
    </citation>
    <scope>NUCLEOTIDE SEQUENCE [LARGE SCALE GENOMIC DNA]</scope>
    <source>
        <strain>ATCC 11503 / BCRC 21390 / CBS 2605 / JCM 1781 / NBRC 1676 / NRRL YB-4239</strain>
    </source>
</reference>